<dbReference type="EMBL" id="AC105061">
    <property type="status" value="NOT_ANNOTATED_CDS"/>
    <property type="molecule type" value="Genomic_DNA"/>
</dbReference>
<dbReference type="EMBL" id="AC162855">
    <property type="status" value="NOT_ANNOTATED_CDS"/>
    <property type="molecule type" value="Genomic_DNA"/>
</dbReference>
<dbReference type="EMBL" id="CH466585">
    <property type="protein sequence ID" value="EDL01829.1"/>
    <property type="molecule type" value="Genomic_DNA"/>
</dbReference>
<dbReference type="EMBL" id="BC089010">
    <property type="protein sequence ID" value="AAH89010.1"/>
    <property type="molecule type" value="mRNA"/>
</dbReference>
<dbReference type="EMBL" id="BC139380">
    <property type="protein sequence ID" value="AAI39381.1"/>
    <property type="molecule type" value="mRNA"/>
</dbReference>
<dbReference type="EMBL" id="BC139419">
    <property type="protein sequence ID" value="AAI39420.1"/>
    <property type="molecule type" value="mRNA"/>
</dbReference>
<dbReference type="CCDS" id="CCDS38033.1">
    <molecule id="G3XA57-2"/>
</dbReference>
<dbReference type="RefSeq" id="NP_001028344.2">
    <molecule id="G3XA57-2"/>
    <property type="nucleotide sequence ID" value="NM_001033172.3"/>
</dbReference>
<dbReference type="RefSeq" id="NP_001157839.1">
    <property type="nucleotide sequence ID" value="NM_001164367.1"/>
</dbReference>
<dbReference type="BMRB" id="G3XA57"/>
<dbReference type="SMR" id="G3XA57"/>
<dbReference type="BioGRID" id="217140">
    <property type="interactions" value="11"/>
</dbReference>
<dbReference type="FunCoup" id="G3XA57">
    <property type="interactions" value="3819"/>
</dbReference>
<dbReference type="STRING" id="10090.ENSMUSP00000059978"/>
<dbReference type="GlyGen" id="G3XA57">
    <property type="glycosylation" value="5 sites, 1 N-linked glycan (1 site), 1 O-linked glycan (4 sites)"/>
</dbReference>
<dbReference type="iPTMnet" id="G3XA57"/>
<dbReference type="PhosphoSitePlus" id="G3XA57"/>
<dbReference type="jPOST" id="G3XA57"/>
<dbReference type="PaxDb" id="10090-ENSMUSP00000059978"/>
<dbReference type="PeptideAtlas" id="G3XA57"/>
<dbReference type="ProteomicsDB" id="254920">
    <molecule id="G3XA57-1"/>
</dbReference>
<dbReference type="ProteomicsDB" id="254921">
    <molecule id="G3XA57-2"/>
</dbReference>
<dbReference type="Pumba" id="G3XA57"/>
<dbReference type="Antibodypedia" id="46274">
    <property type="antibodies" value="156 antibodies from 28 providers"/>
</dbReference>
<dbReference type="DNASU" id="74998"/>
<dbReference type="Ensembl" id="ENSMUST00000051996.13">
    <molecule id="G3XA57-2"/>
    <property type="protein sequence ID" value="ENSMUSP00000059978.7"/>
    <property type="gene ID" value="ENSMUSG00000040022.15"/>
</dbReference>
<dbReference type="Ensembl" id="ENSMUST00000170819.2">
    <molecule id="G3XA57-1"/>
    <property type="protein sequence ID" value="ENSMUSP00000133151.2"/>
    <property type="gene ID" value="ENSMUSG00000040022.15"/>
</dbReference>
<dbReference type="GeneID" id="74998"/>
<dbReference type="KEGG" id="mmu:74998"/>
<dbReference type="UCSC" id="uc008ibm.1">
    <molecule id="G3XA57-1"/>
    <property type="organism name" value="mouse"/>
</dbReference>
<dbReference type="UCSC" id="uc008ibn.2">
    <molecule id="G3XA57-2"/>
    <property type="organism name" value="mouse"/>
</dbReference>
<dbReference type="AGR" id="MGI:1922248"/>
<dbReference type="CTD" id="22841"/>
<dbReference type="MGI" id="MGI:1922248">
    <property type="gene designation" value="Rab11fip2"/>
</dbReference>
<dbReference type="VEuPathDB" id="HostDB:ENSMUSG00000040022"/>
<dbReference type="eggNOG" id="ENOG502QUFJ">
    <property type="taxonomic scope" value="Eukaryota"/>
</dbReference>
<dbReference type="GeneTree" id="ENSGT00940000158482"/>
<dbReference type="HOGENOM" id="CLU_015242_0_0_1"/>
<dbReference type="InParanoid" id="G3XA57"/>
<dbReference type="OMA" id="GETHQES"/>
<dbReference type="OrthoDB" id="30211at9989"/>
<dbReference type="TreeFam" id="TF326172"/>
<dbReference type="Reactome" id="R-MMU-432040">
    <property type="pathway name" value="Vasopressin regulates renal water homeostasis via Aquaporins"/>
</dbReference>
<dbReference type="BioGRID-ORCS" id="74998">
    <property type="hits" value="1 hit in 61 CRISPR screens"/>
</dbReference>
<dbReference type="CD-CODE" id="CE726F99">
    <property type="entry name" value="Postsynaptic density"/>
</dbReference>
<dbReference type="ChiTaRS" id="Rab11fip2">
    <property type="organism name" value="mouse"/>
</dbReference>
<dbReference type="PRO" id="PR:G3XA57"/>
<dbReference type="Proteomes" id="UP000000589">
    <property type="component" value="Chromosome 19"/>
</dbReference>
<dbReference type="RNAct" id="G3XA57">
    <property type="molecule type" value="protein"/>
</dbReference>
<dbReference type="Bgee" id="ENSMUSG00000040022">
    <property type="expression patterns" value="Expressed in indifferent gonad and 229 other cell types or tissues"/>
</dbReference>
<dbReference type="ExpressionAtlas" id="G3XA57">
    <property type="expression patterns" value="baseline and differential"/>
</dbReference>
<dbReference type="GO" id="GO:0005654">
    <property type="term" value="C:nucleoplasm"/>
    <property type="evidence" value="ECO:0007669"/>
    <property type="project" value="Ensembl"/>
</dbReference>
<dbReference type="GO" id="GO:0001891">
    <property type="term" value="C:phagocytic cup"/>
    <property type="evidence" value="ECO:0007669"/>
    <property type="project" value="Ensembl"/>
</dbReference>
<dbReference type="GO" id="GO:0055038">
    <property type="term" value="C:recycling endosome membrane"/>
    <property type="evidence" value="ECO:0007669"/>
    <property type="project" value="UniProtKB-SubCell"/>
</dbReference>
<dbReference type="GO" id="GO:0042803">
    <property type="term" value="F:protein homodimerization activity"/>
    <property type="evidence" value="ECO:0007669"/>
    <property type="project" value="Ensembl"/>
</dbReference>
<dbReference type="GO" id="GO:0019901">
    <property type="term" value="F:protein kinase binding"/>
    <property type="evidence" value="ECO:0007669"/>
    <property type="project" value="Ensembl"/>
</dbReference>
<dbReference type="GO" id="GO:0031267">
    <property type="term" value="F:small GTPase binding"/>
    <property type="evidence" value="ECO:0007669"/>
    <property type="project" value="InterPro"/>
</dbReference>
<dbReference type="GO" id="GO:0030010">
    <property type="term" value="P:establishment of cell polarity"/>
    <property type="evidence" value="ECO:0007669"/>
    <property type="project" value="Ensembl"/>
</dbReference>
<dbReference type="GO" id="GO:0035773">
    <property type="term" value="P:insulin secretion involved in cellular response to glucose stimulus"/>
    <property type="evidence" value="ECO:0000315"/>
    <property type="project" value="UniProtKB"/>
</dbReference>
<dbReference type="GO" id="GO:0006909">
    <property type="term" value="P:phagocytosis"/>
    <property type="evidence" value="ECO:0007669"/>
    <property type="project" value="Ensembl"/>
</dbReference>
<dbReference type="GO" id="GO:1903078">
    <property type="term" value="P:positive regulation of protein localization to plasma membrane"/>
    <property type="evidence" value="ECO:0007669"/>
    <property type="project" value="Ensembl"/>
</dbReference>
<dbReference type="GO" id="GO:0045055">
    <property type="term" value="P:regulated exocytosis"/>
    <property type="evidence" value="ECO:0000315"/>
    <property type="project" value="UniProtKB"/>
</dbReference>
<dbReference type="GO" id="GO:0035669">
    <property type="term" value="P:TRAM-dependent toll-like receptor 4 signaling pathway"/>
    <property type="evidence" value="ECO:0007669"/>
    <property type="project" value="Ensembl"/>
</dbReference>
<dbReference type="CDD" id="cd08682">
    <property type="entry name" value="C2_Rab11-FIP_classI"/>
    <property type="match status" value="1"/>
</dbReference>
<dbReference type="FunFam" id="1.20.5.2440:FF:000002">
    <property type="entry name" value="rab11 family-interacting protein 2 isoform X1"/>
    <property type="match status" value="1"/>
</dbReference>
<dbReference type="FunFam" id="2.60.40.150:FF:000070">
    <property type="entry name" value="rab11 family-interacting protein 2 isoform X1"/>
    <property type="match status" value="1"/>
</dbReference>
<dbReference type="Gene3D" id="1.20.5.2440">
    <property type="match status" value="1"/>
</dbReference>
<dbReference type="Gene3D" id="2.60.40.150">
    <property type="entry name" value="C2 domain"/>
    <property type="match status" value="1"/>
</dbReference>
<dbReference type="InterPro" id="IPR000008">
    <property type="entry name" value="C2_dom"/>
</dbReference>
<dbReference type="InterPro" id="IPR035892">
    <property type="entry name" value="C2_domain_sf"/>
</dbReference>
<dbReference type="InterPro" id="IPR037245">
    <property type="entry name" value="FIP-RBD_C_sf"/>
</dbReference>
<dbReference type="InterPro" id="IPR037789">
    <property type="entry name" value="FIP_classI"/>
</dbReference>
<dbReference type="InterPro" id="IPR019018">
    <property type="entry name" value="Rab-bd_FIP-RBD"/>
</dbReference>
<dbReference type="PANTHER" id="PTHR15746:SF20">
    <property type="entry name" value="RAB11 FAMILY-INTERACTING PROTEIN 2"/>
    <property type="match status" value="1"/>
</dbReference>
<dbReference type="PANTHER" id="PTHR15746">
    <property type="entry name" value="RAB11-RELATED"/>
    <property type="match status" value="1"/>
</dbReference>
<dbReference type="Pfam" id="PF00168">
    <property type="entry name" value="C2"/>
    <property type="match status" value="1"/>
</dbReference>
<dbReference type="Pfam" id="PF09457">
    <property type="entry name" value="RBD-FIP"/>
    <property type="match status" value="1"/>
</dbReference>
<dbReference type="SMART" id="SM00239">
    <property type="entry name" value="C2"/>
    <property type="match status" value="1"/>
</dbReference>
<dbReference type="SUPFAM" id="SSF49562">
    <property type="entry name" value="C2 domain (Calcium/lipid-binding domain, CaLB)"/>
    <property type="match status" value="1"/>
</dbReference>
<dbReference type="SUPFAM" id="SSF144270">
    <property type="entry name" value="Eferin C-derminal domain-like"/>
    <property type="match status" value="1"/>
</dbReference>
<dbReference type="PROSITE" id="PS50004">
    <property type="entry name" value="C2"/>
    <property type="match status" value="1"/>
</dbReference>
<dbReference type="PROSITE" id="PS51511">
    <property type="entry name" value="FIP_RBD"/>
    <property type="match status" value="1"/>
</dbReference>
<keyword id="KW-0025">Alternative splicing</keyword>
<keyword id="KW-1003">Cell membrane</keyword>
<keyword id="KW-0967">Endosome</keyword>
<keyword id="KW-0472">Membrane</keyword>
<keyword id="KW-0597">Phosphoprotein</keyword>
<keyword id="KW-0653">Protein transport</keyword>
<keyword id="KW-1185">Reference proteome</keyword>
<keyword id="KW-0677">Repeat</keyword>
<keyword id="KW-0813">Transport</keyword>
<name>RFIP2_MOUSE</name>
<feature type="chain" id="PRO_0000424063" description="Rab11 family-interacting protein 2">
    <location>
        <begin position="1"/>
        <end position="512"/>
    </location>
</feature>
<feature type="domain" description="C2" evidence="3">
    <location>
        <begin position="1"/>
        <end position="120"/>
    </location>
</feature>
<feature type="domain" description="FIP-RBD" evidence="4">
    <location>
        <begin position="437"/>
        <end position="499"/>
    </location>
</feature>
<feature type="region of interest" description="Necessary for its cellular translocation to the plasma membrane" evidence="1">
    <location>
        <begin position="15"/>
        <end position="102"/>
    </location>
</feature>
<feature type="region of interest" description="Disordered" evidence="5">
    <location>
        <begin position="174"/>
        <end position="231"/>
    </location>
</feature>
<feature type="region of interest" description="Disordered" evidence="5">
    <location>
        <begin position="263"/>
        <end position="287"/>
    </location>
</feature>
<feature type="region of interest" description="Disordered" evidence="5">
    <location>
        <begin position="347"/>
        <end position="390"/>
    </location>
</feature>
<feature type="region of interest" description="Necessary for interaction with AP2A1, RAB11A, subcellular location, endocytosis activity and homooligomerization" evidence="1">
    <location>
        <begin position="465"/>
        <end position="512"/>
    </location>
</feature>
<feature type="short sequence motif" description="NPF 1" evidence="1">
    <location>
        <begin position="323"/>
        <end position="325"/>
    </location>
</feature>
<feature type="short sequence motif" description="NPF 2" evidence="1">
    <location>
        <begin position="406"/>
        <end position="408"/>
    </location>
</feature>
<feature type="short sequence motif" description="NPF 2" evidence="1">
    <location>
        <begin position="440"/>
        <end position="442"/>
    </location>
</feature>
<feature type="compositionally biased region" description="Polar residues" evidence="5">
    <location>
        <begin position="221"/>
        <end position="231"/>
    </location>
</feature>
<feature type="compositionally biased region" description="Polar residues" evidence="5">
    <location>
        <begin position="277"/>
        <end position="287"/>
    </location>
</feature>
<feature type="compositionally biased region" description="Basic and acidic residues" evidence="5">
    <location>
        <begin position="347"/>
        <end position="374"/>
    </location>
</feature>
<feature type="modified residue" description="Phosphoserine; by MARK2" evidence="2">
    <location>
        <position position="227"/>
    </location>
</feature>
<feature type="modified residue" description="Phosphoserine" evidence="2">
    <location>
        <position position="277"/>
    </location>
</feature>
<feature type="splice variant" id="VSP_053310" description="In isoform 2." evidence="7">
    <original>GKFTNS</original>
    <variation>VYTQDHLSPGPPHLCGEATSTHS</variation>
    <location>
        <begin position="507"/>
        <end position="512"/>
    </location>
</feature>
<accession>G3XA57</accession>
<accession>B9EID4</accession>
<accession>Q5HZI0</accession>
<organism>
    <name type="scientific">Mus musculus</name>
    <name type="common">Mouse</name>
    <dbReference type="NCBI Taxonomy" id="10090"/>
    <lineage>
        <taxon>Eukaryota</taxon>
        <taxon>Metazoa</taxon>
        <taxon>Chordata</taxon>
        <taxon>Craniata</taxon>
        <taxon>Vertebrata</taxon>
        <taxon>Euteleostomi</taxon>
        <taxon>Mammalia</taxon>
        <taxon>Eutheria</taxon>
        <taxon>Euarchontoglires</taxon>
        <taxon>Glires</taxon>
        <taxon>Rodentia</taxon>
        <taxon>Myomorpha</taxon>
        <taxon>Muroidea</taxon>
        <taxon>Muridae</taxon>
        <taxon>Murinae</taxon>
        <taxon>Mus</taxon>
        <taxon>Mus</taxon>
    </lineage>
</organism>
<protein>
    <recommendedName>
        <fullName>Rab11 family-interacting protein 2</fullName>
        <shortName>Rab11-FIP2</shortName>
    </recommendedName>
</protein>
<gene>
    <name type="primary">Rab11fip2</name>
</gene>
<proteinExistence type="evidence at protein level"/>
<sequence length="512" mass="58207">MMLSEQAQKWFPTHVQVTVLQAKDLKPKGKSGTNDTYTIIQLGKEKYSTSVAEKTLEPVWKEEASFELPGLLMQGSPEKYILFLIVMHRSLVGLDKFLGQVAINLNDIFEDKQRRKTEWFRLESKQGKRIKNRGEIKVNIQFMRNNMTASMFDLSMKDKTRSPFAKLKDKMKGRKSDGVFSDTSSAIVPSTHMPDANPEFSSGEMQMKSKPKKPFLLGPQRLSSAHSMSDLTGSHLSSEKLKSSTVGPTHLLSRQIDSFGVVPESGSLKSPHRRTLSFDTSKLNQPGSIVDEGEHSFGRQSDPFTNVTASLPQKFATLPRKKNPFEESSEPWDSSMNLFSKPIEVRKESKREKREKVSLFERVTGKRDSRRPDKLNNGGSDSPCDLKSPSAFSENRQDYFEYESTNPFTAKFRASTIMPSSSFHVNPTSSEDLRKIPDNNPFDATAGYRSLTYEEVLQELVKHKELLRRKDTHIRELEDYIDNLLVRVMEETPSILRVPYEPSRKAGKFTNS</sequence>
<evidence type="ECO:0000250" key="1"/>
<evidence type="ECO:0000250" key="2">
    <source>
        <dbReference type="UniProtKB" id="Q7L804"/>
    </source>
</evidence>
<evidence type="ECO:0000255" key="3">
    <source>
        <dbReference type="PROSITE-ProRule" id="PRU00041"/>
    </source>
</evidence>
<evidence type="ECO:0000255" key="4">
    <source>
        <dbReference type="PROSITE-ProRule" id="PRU00844"/>
    </source>
</evidence>
<evidence type="ECO:0000256" key="5">
    <source>
        <dbReference type="SAM" id="MobiDB-lite"/>
    </source>
</evidence>
<evidence type="ECO:0000269" key="6">
    <source>
    </source>
</evidence>
<evidence type="ECO:0000303" key="7">
    <source>
    </source>
</evidence>
<comment type="function">
    <text evidence="2 6">A Rab11 effector binding preferentially phosphatidylinositol 3,4,5-trisphosphate (PtdInsP3) and phosphatidic acid (PA) and acting in the regulation of the transport of vesicles from the endosomal recycling compartment (ERC) to the plasma membrane. Involved in insulin granule exocytosis. Also involved in receptor-mediated endocytosis and membrane trafficking of recycling endosomes, probably originating from clathrin-coated vesicles. Required in a complex with MYO5B and RAB11 for the transport of NPC1L1 to the plasma membrane. Also acts as a regulator of cell polarity. Plays an essential role in phagocytosis through a mechanism involving TICAM2, RAC1 and CDC42 Rho GTPases for controlling actin-dynamics.</text>
</comment>
<comment type="subunit">
    <text evidence="2">Homooligomerizes in a Rab11-independent manner. Forms a heterooligomeric complex with RAB11FIP4. Interacts with AP2A1, MYO5B, RAB25 and REPS1. Interacts with RAB11A and RAB11B (activated GTP-bound form). Interacts with NPC1L1. Interacts (via NPF motifs) with EHD1 and EHD3. Interacts with TICAM2; this interaction directs RAB11FIP2 to the phagosome. Interacts with RAB14 and RAB25 (GTP-bound forms) (By similarity).</text>
</comment>
<comment type="subcellular location">
    <subcellularLocation>
        <location>Cell membrane</location>
        <topology>Peripheral membrane protein</topology>
    </subcellularLocation>
    <subcellularLocation>
        <location evidence="1">Recycling endosome membrane</location>
        <topology evidence="1">Peripheral membrane protein</topology>
    </subcellularLocation>
    <text evidence="1">Translocates with RAB11A from the vesicles of the endocytic recycling compartment (ERC) to the plasma membrane.</text>
</comment>
<comment type="alternative products">
    <event type="alternative splicing"/>
    <isoform>
        <id>G3XA57-1</id>
        <name>1</name>
        <sequence type="displayed"/>
    </isoform>
    <isoform>
        <id>G3XA57-2</id>
        <name>2</name>
        <sequence type="described" ref="VSP_053310"/>
    </isoform>
</comment>
<comment type="PTM">
    <text>Phosphorylation at Ser-227 by MARK2 regulates epithelial cell polarity.</text>
</comment>
<reference key="1">
    <citation type="journal article" date="2009" name="PLoS Biol.">
        <title>Lineage-specific biology revealed by a finished genome assembly of the mouse.</title>
        <authorList>
            <person name="Church D.M."/>
            <person name="Goodstadt L."/>
            <person name="Hillier L.W."/>
            <person name="Zody M.C."/>
            <person name="Goldstein S."/>
            <person name="She X."/>
            <person name="Bult C.J."/>
            <person name="Agarwala R."/>
            <person name="Cherry J.L."/>
            <person name="DiCuccio M."/>
            <person name="Hlavina W."/>
            <person name="Kapustin Y."/>
            <person name="Meric P."/>
            <person name="Maglott D."/>
            <person name="Birtle Z."/>
            <person name="Marques A.C."/>
            <person name="Graves T."/>
            <person name="Zhou S."/>
            <person name="Teague B."/>
            <person name="Potamousis K."/>
            <person name="Churas C."/>
            <person name="Place M."/>
            <person name="Herschleb J."/>
            <person name="Runnheim R."/>
            <person name="Forrest D."/>
            <person name="Amos-Landgraf J."/>
            <person name="Schwartz D.C."/>
            <person name="Cheng Z."/>
            <person name="Lindblad-Toh K."/>
            <person name="Eichler E.E."/>
            <person name="Ponting C.P."/>
        </authorList>
    </citation>
    <scope>NUCLEOTIDE SEQUENCE [LARGE SCALE GENOMIC DNA]</scope>
    <source>
        <strain>C57BL/6J</strain>
    </source>
</reference>
<reference key="2">
    <citation type="submission" date="2005-07" db="EMBL/GenBank/DDBJ databases">
        <authorList>
            <person name="Mural R.J."/>
            <person name="Adams M.D."/>
            <person name="Myers E.W."/>
            <person name="Smith H.O."/>
            <person name="Venter J.C."/>
        </authorList>
    </citation>
    <scope>NUCLEOTIDE SEQUENCE [LARGE SCALE GENOMIC DNA]</scope>
</reference>
<reference key="3">
    <citation type="journal article" date="2004" name="Genome Res.">
        <title>The status, quality, and expansion of the NIH full-length cDNA project: the Mammalian Gene Collection (MGC).</title>
        <authorList>
            <consortium name="The MGC Project Team"/>
        </authorList>
    </citation>
    <scope>NUCLEOTIDE SEQUENCE [LARGE SCALE MRNA] (ISOFORMS 1 AND 2)</scope>
    <source>
        <strain>C57BL/6J</strain>
        <tissue>Brain</tissue>
    </source>
</reference>
<reference key="4">
    <citation type="journal article" date="2009" name="Genes Cells">
        <title>Rab11 and its effector Rip11 participate in regulation of insulin granule exocytosis.</title>
        <authorList>
            <person name="Sugawara K."/>
            <person name="Shibasaki T."/>
            <person name="Mizoguchi A."/>
            <person name="Saito T."/>
            <person name="Seino S."/>
        </authorList>
    </citation>
    <scope>FUNCTION IN EXOCYTOSIS</scope>
</reference>
<reference key="5">
    <citation type="journal article" date="2010" name="Cell">
        <title>A tissue-specific atlas of mouse protein phosphorylation and expression.</title>
        <authorList>
            <person name="Huttlin E.L."/>
            <person name="Jedrychowski M.P."/>
            <person name="Elias J.E."/>
            <person name="Goswami T."/>
            <person name="Rad R."/>
            <person name="Beausoleil S.A."/>
            <person name="Villen J."/>
            <person name="Haas W."/>
            <person name="Sowa M.E."/>
            <person name="Gygi S.P."/>
        </authorList>
    </citation>
    <scope>IDENTIFICATION BY MASS SPECTROMETRY [LARGE SCALE ANALYSIS]</scope>
    <source>
        <tissue>Brain</tissue>
    </source>
</reference>